<organism>
    <name type="scientific">Pseudomonas aeruginosa</name>
    <dbReference type="NCBI Taxonomy" id="287"/>
    <lineage>
        <taxon>Bacteria</taxon>
        <taxon>Pseudomonadati</taxon>
        <taxon>Pseudomonadota</taxon>
        <taxon>Gammaproteobacteria</taxon>
        <taxon>Pseudomonadales</taxon>
        <taxon>Pseudomonadaceae</taxon>
        <taxon>Pseudomonas</taxon>
    </lineage>
</organism>
<reference key="1">
    <citation type="journal article" date="1983" name="Mol. Gen. Genet.">
        <title>DNA sequences of and complementation by the tnpR genes of Tn21, Tn501 and Tn1721.</title>
        <authorList>
            <person name="Diver W.P."/>
            <person name="Grinsted J."/>
            <person name="Fritzinger D.C."/>
            <person name="Brown N.L."/>
            <person name="Altenbuchner J."/>
            <person name="Rogowsky P."/>
            <person name="Schmitt R."/>
        </authorList>
    </citation>
    <scope>NUCLEOTIDE SEQUENCE [GENOMIC DNA]</scope>
</reference>
<evidence type="ECO:0000255" key="1"/>
<evidence type="ECO:0000255" key="2">
    <source>
        <dbReference type="PROSITE-ProRule" id="PRU01072"/>
    </source>
</evidence>
<evidence type="ECO:0000256" key="3">
    <source>
        <dbReference type="SAM" id="MobiDB-lite"/>
    </source>
</evidence>
<evidence type="ECO:0000305" key="4"/>
<sequence>MQGHRIGYVRVSSFDQNPERQLEQTQVSKVFTDKASGKDTQRPQLEALLSFVREGDTVVVHSMDRLARNLDDLRRLVQKLTQRGVRIEFLKEGLVFTGEDSPMANLMLSVMGAFAEFERALIRERQREGITLAKQRGAYRGRKKALSDEQAATLRQRATAGEPKAQLAREFNISRETLYQYLRTDD</sequence>
<keyword id="KW-0229">DNA integration</keyword>
<keyword id="KW-0233">DNA recombination</keyword>
<keyword id="KW-0238">DNA-binding</keyword>
<keyword id="KW-0614">Plasmid</keyword>
<keyword id="KW-0814">Transposable element</keyword>
<comment type="function">
    <text>Resolvase catalyzes the resolution (a site-specific recombination) of the cointegrated replicon to yield the final transposition products.</text>
</comment>
<comment type="similarity">
    <text evidence="4">Belongs to the site-specific recombinase resolvase family.</text>
</comment>
<dbReference type="EMBL" id="Z00027">
    <property type="protein sequence ID" value="CAA77327.1"/>
    <property type="molecule type" value="Genomic_DNA"/>
</dbReference>
<dbReference type="PIR" id="S09632">
    <property type="entry name" value="S09632"/>
</dbReference>
<dbReference type="RefSeq" id="WP_010921730.1">
    <property type="nucleotide sequence ID" value="NZ_WXZT01000052.1"/>
</dbReference>
<dbReference type="SMR" id="P06691"/>
<dbReference type="eggNOG" id="COG1961">
    <property type="taxonomic scope" value="Bacteria"/>
</dbReference>
<dbReference type="GO" id="GO:0003677">
    <property type="term" value="F:DNA binding"/>
    <property type="evidence" value="ECO:0007669"/>
    <property type="project" value="UniProtKB-KW"/>
</dbReference>
<dbReference type="GO" id="GO:0000150">
    <property type="term" value="F:DNA strand exchange activity"/>
    <property type="evidence" value="ECO:0007669"/>
    <property type="project" value="InterPro"/>
</dbReference>
<dbReference type="GO" id="GO:0015074">
    <property type="term" value="P:DNA integration"/>
    <property type="evidence" value="ECO:0007669"/>
    <property type="project" value="UniProtKB-KW"/>
</dbReference>
<dbReference type="CDD" id="cd00569">
    <property type="entry name" value="HTH_Hin_like"/>
    <property type="match status" value="1"/>
</dbReference>
<dbReference type="CDD" id="cd03768">
    <property type="entry name" value="SR_ResInv"/>
    <property type="match status" value="1"/>
</dbReference>
<dbReference type="Gene3D" id="1.10.10.60">
    <property type="entry name" value="Homeodomain-like"/>
    <property type="match status" value="1"/>
</dbReference>
<dbReference type="Gene3D" id="3.40.50.1390">
    <property type="entry name" value="Resolvase, N-terminal catalytic domain"/>
    <property type="match status" value="1"/>
</dbReference>
<dbReference type="InterPro" id="IPR009057">
    <property type="entry name" value="Homeodomain-like_sf"/>
</dbReference>
<dbReference type="InterPro" id="IPR006118">
    <property type="entry name" value="Recombinase_CS"/>
</dbReference>
<dbReference type="InterPro" id="IPR006119">
    <property type="entry name" value="Resolv_N"/>
</dbReference>
<dbReference type="InterPro" id="IPR036162">
    <property type="entry name" value="Resolvase-like_N_sf"/>
</dbReference>
<dbReference type="InterPro" id="IPR006120">
    <property type="entry name" value="Resolvase_HTH_dom"/>
</dbReference>
<dbReference type="InterPro" id="IPR050639">
    <property type="entry name" value="SSR_resolvase"/>
</dbReference>
<dbReference type="PANTHER" id="PTHR30461">
    <property type="entry name" value="DNA-INVERTASE FROM LAMBDOID PROPHAGE"/>
    <property type="match status" value="1"/>
</dbReference>
<dbReference type="PANTHER" id="PTHR30461:SF26">
    <property type="entry name" value="RESOLVASE HOMOLOG YNEB"/>
    <property type="match status" value="1"/>
</dbReference>
<dbReference type="Pfam" id="PF02796">
    <property type="entry name" value="HTH_7"/>
    <property type="match status" value="1"/>
</dbReference>
<dbReference type="Pfam" id="PF00239">
    <property type="entry name" value="Resolvase"/>
    <property type="match status" value="1"/>
</dbReference>
<dbReference type="SMART" id="SM00857">
    <property type="entry name" value="Resolvase"/>
    <property type="match status" value="1"/>
</dbReference>
<dbReference type="SUPFAM" id="SSF46689">
    <property type="entry name" value="Homeodomain-like"/>
    <property type="match status" value="1"/>
</dbReference>
<dbReference type="SUPFAM" id="SSF53041">
    <property type="entry name" value="Resolvase-like"/>
    <property type="match status" value="1"/>
</dbReference>
<dbReference type="PROSITE" id="PS00397">
    <property type="entry name" value="RECOMBINASES_1"/>
    <property type="match status" value="1"/>
</dbReference>
<dbReference type="PROSITE" id="PS00398">
    <property type="entry name" value="RECOMBINASES_2"/>
    <property type="match status" value="1"/>
</dbReference>
<dbReference type="PROSITE" id="PS51736">
    <property type="entry name" value="RECOMBINASES_3"/>
    <property type="match status" value="1"/>
</dbReference>
<geneLocation type="plasmid">
    <name>pVS1</name>
</geneLocation>
<proteinExistence type="inferred from homology"/>
<feature type="chain" id="PRO_0000196373" description="Transposon Tn501 resolvase">
    <location>
        <begin position="1"/>
        <end position="186"/>
    </location>
</feature>
<feature type="domain" description="Resolvase/invertase-type recombinase catalytic" evidence="2">
    <location>
        <begin position="4"/>
        <end position="137"/>
    </location>
</feature>
<feature type="DNA-binding region" description="H-T-H motif" evidence="1">
    <location>
        <begin position="164"/>
        <end position="183"/>
    </location>
</feature>
<feature type="region of interest" description="Disordered" evidence="3">
    <location>
        <begin position="17"/>
        <end position="38"/>
    </location>
</feature>
<feature type="active site" description="O-(5'-phospho-DNA)-serine intermediate" evidence="2">
    <location>
        <position position="12"/>
    </location>
</feature>
<protein>
    <recommendedName>
        <fullName>Transposon Tn501 resolvase</fullName>
    </recommendedName>
</protein>
<accession>P06691</accession>
<gene>
    <name type="primary">tnpR</name>
</gene>
<name>TNR5_PSEAI</name>